<accession>A2SHS6</accession>
<dbReference type="EC" id="5.4.99.12" evidence="1"/>
<dbReference type="EMBL" id="CP000555">
    <property type="protein sequence ID" value="ABM95115.1"/>
    <property type="molecule type" value="Genomic_DNA"/>
</dbReference>
<dbReference type="RefSeq" id="WP_011829752.1">
    <property type="nucleotide sequence ID" value="NC_008825.1"/>
</dbReference>
<dbReference type="SMR" id="A2SHS6"/>
<dbReference type="STRING" id="420662.Mpe_A2159"/>
<dbReference type="KEGG" id="mpt:Mpe_A2159"/>
<dbReference type="eggNOG" id="COG0101">
    <property type="taxonomic scope" value="Bacteria"/>
</dbReference>
<dbReference type="HOGENOM" id="CLU_014673_0_2_4"/>
<dbReference type="Proteomes" id="UP000000366">
    <property type="component" value="Chromosome"/>
</dbReference>
<dbReference type="GO" id="GO:0003723">
    <property type="term" value="F:RNA binding"/>
    <property type="evidence" value="ECO:0007669"/>
    <property type="project" value="InterPro"/>
</dbReference>
<dbReference type="GO" id="GO:0160147">
    <property type="term" value="F:tRNA pseudouridine(38-40) synthase activity"/>
    <property type="evidence" value="ECO:0007669"/>
    <property type="project" value="UniProtKB-EC"/>
</dbReference>
<dbReference type="GO" id="GO:0031119">
    <property type="term" value="P:tRNA pseudouridine synthesis"/>
    <property type="evidence" value="ECO:0007669"/>
    <property type="project" value="UniProtKB-UniRule"/>
</dbReference>
<dbReference type="CDD" id="cd02570">
    <property type="entry name" value="PseudoU_synth_EcTruA"/>
    <property type="match status" value="1"/>
</dbReference>
<dbReference type="FunFam" id="3.30.70.580:FF:000001">
    <property type="entry name" value="tRNA pseudouridine synthase A"/>
    <property type="match status" value="1"/>
</dbReference>
<dbReference type="Gene3D" id="3.30.70.660">
    <property type="entry name" value="Pseudouridine synthase I, catalytic domain, C-terminal subdomain"/>
    <property type="match status" value="1"/>
</dbReference>
<dbReference type="Gene3D" id="3.30.70.580">
    <property type="entry name" value="Pseudouridine synthase I, catalytic domain, N-terminal subdomain"/>
    <property type="match status" value="1"/>
</dbReference>
<dbReference type="HAMAP" id="MF_00171">
    <property type="entry name" value="TruA"/>
    <property type="match status" value="1"/>
</dbReference>
<dbReference type="InterPro" id="IPR020103">
    <property type="entry name" value="PsdUridine_synth_cat_dom_sf"/>
</dbReference>
<dbReference type="InterPro" id="IPR001406">
    <property type="entry name" value="PsdUridine_synth_TruA"/>
</dbReference>
<dbReference type="InterPro" id="IPR020097">
    <property type="entry name" value="PsdUridine_synth_TruA_a/b_dom"/>
</dbReference>
<dbReference type="InterPro" id="IPR020095">
    <property type="entry name" value="PsdUridine_synth_TruA_C"/>
</dbReference>
<dbReference type="InterPro" id="IPR020094">
    <property type="entry name" value="TruA/RsuA/RluB/E/F_N"/>
</dbReference>
<dbReference type="NCBIfam" id="TIGR00071">
    <property type="entry name" value="hisT_truA"/>
    <property type="match status" value="1"/>
</dbReference>
<dbReference type="PANTHER" id="PTHR11142">
    <property type="entry name" value="PSEUDOURIDYLATE SYNTHASE"/>
    <property type="match status" value="1"/>
</dbReference>
<dbReference type="PANTHER" id="PTHR11142:SF0">
    <property type="entry name" value="TRNA PSEUDOURIDINE SYNTHASE-LIKE 1"/>
    <property type="match status" value="1"/>
</dbReference>
<dbReference type="Pfam" id="PF01416">
    <property type="entry name" value="PseudoU_synth_1"/>
    <property type="match status" value="2"/>
</dbReference>
<dbReference type="PIRSF" id="PIRSF001430">
    <property type="entry name" value="tRNA_psdUrid_synth"/>
    <property type="match status" value="1"/>
</dbReference>
<dbReference type="SUPFAM" id="SSF55120">
    <property type="entry name" value="Pseudouridine synthase"/>
    <property type="match status" value="1"/>
</dbReference>
<reference key="1">
    <citation type="journal article" date="2007" name="J. Bacteriol.">
        <title>Whole-genome analysis of the methyl tert-butyl ether-degrading beta-proteobacterium Methylibium petroleiphilum PM1.</title>
        <authorList>
            <person name="Kane S.R."/>
            <person name="Chakicherla A.Y."/>
            <person name="Chain P.S.G."/>
            <person name="Schmidt R."/>
            <person name="Shin M.W."/>
            <person name="Legler T.C."/>
            <person name="Scow K.M."/>
            <person name="Larimer F.W."/>
            <person name="Lucas S.M."/>
            <person name="Richardson P.M."/>
            <person name="Hristova K.R."/>
        </authorList>
    </citation>
    <scope>NUCLEOTIDE SEQUENCE [LARGE SCALE GENOMIC DNA]</scope>
    <source>
        <strain>ATCC BAA-1232 / LMG 22953 / PM1</strain>
    </source>
</reference>
<proteinExistence type="inferred from homology"/>
<keyword id="KW-0413">Isomerase</keyword>
<keyword id="KW-1185">Reference proteome</keyword>
<keyword id="KW-0819">tRNA processing</keyword>
<protein>
    <recommendedName>
        <fullName evidence="1">tRNA pseudouridine synthase A</fullName>
        <ecNumber evidence="1">5.4.99.12</ecNumber>
    </recommendedName>
    <alternativeName>
        <fullName evidence="1">tRNA pseudouridine(38-40) synthase</fullName>
    </alternativeName>
    <alternativeName>
        <fullName evidence="1">tRNA pseudouridylate synthase I</fullName>
    </alternativeName>
    <alternativeName>
        <fullName evidence="1">tRNA-uridine isomerase I</fullName>
    </alternativeName>
</protein>
<gene>
    <name evidence="1" type="primary">truA</name>
    <name type="ordered locus">Mpe_A2159</name>
</gene>
<feature type="chain" id="PRO_1000017116" description="tRNA pseudouridine synthase A">
    <location>
        <begin position="1"/>
        <end position="260"/>
    </location>
</feature>
<feature type="active site" description="Nucleophile" evidence="1">
    <location>
        <position position="51"/>
    </location>
</feature>
<feature type="binding site" evidence="1">
    <location>
        <position position="109"/>
    </location>
    <ligand>
        <name>substrate</name>
    </ligand>
</feature>
<evidence type="ECO:0000255" key="1">
    <source>
        <dbReference type="HAMAP-Rule" id="MF_00171"/>
    </source>
</evidence>
<comment type="function">
    <text evidence="1">Formation of pseudouridine at positions 38, 39 and 40 in the anticodon stem and loop of transfer RNAs.</text>
</comment>
<comment type="catalytic activity">
    <reaction evidence="1">
        <text>uridine(38/39/40) in tRNA = pseudouridine(38/39/40) in tRNA</text>
        <dbReference type="Rhea" id="RHEA:22376"/>
        <dbReference type="Rhea" id="RHEA-COMP:10085"/>
        <dbReference type="Rhea" id="RHEA-COMP:10087"/>
        <dbReference type="ChEBI" id="CHEBI:65314"/>
        <dbReference type="ChEBI" id="CHEBI:65315"/>
        <dbReference type="EC" id="5.4.99.12"/>
    </reaction>
</comment>
<comment type="subunit">
    <text evidence="1">Homodimer.</text>
</comment>
<comment type="similarity">
    <text evidence="1">Belongs to the tRNA pseudouridine synthase TruA family.</text>
</comment>
<organism>
    <name type="scientific">Methylibium petroleiphilum (strain ATCC BAA-1232 / LMG 22953 / PM1)</name>
    <dbReference type="NCBI Taxonomy" id="420662"/>
    <lineage>
        <taxon>Bacteria</taxon>
        <taxon>Pseudomonadati</taxon>
        <taxon>Pseudomonadota</taxon>
        <taxon>Betaproteobacteria</taxon>
        <taxon>Burkholderiales</taxon>
        <taxon>Sphaerotilaceae</taxon>
        <taxon>Methylibium</taxon>
    </lineage>
</organism>
<sequence>MRLALGLSYRGGAYRGWQSQPDGLTVQDRVEEALARFADRPVRTVCAGRTDAGVHALNQVVHLDTEIEREPFSWVRGTNRYLPPDIAVQWCRPVDAAFHARNSARGRRYAYLLLESPVRPAIEAGAVGWVFRPLDATPMREAAAHLIGEHDFSAFRSAECQAASPVKNLRRIEIVRCGAYWRFEFEASAFLHHMVRNLMGCLLAVGQGVRAPQWLAEVLAAGDRRRAAPTFAPDGLYFLGPQYDANLDLPERTPAFDWLP</sequence>
<name>TRUA_METPP</name>